<gene>
    <name type="primary">ydgH</name>
    <name type="ordered locus">b1604</name>
    <name type="ordered locus">JW1596</name>
</gene>
<proteinExistence type="evidence at protein level"/>
<reference key="1">
    <citation type="journal article" date="1997" name="Science">
        <title>The complete genome sequence of Escherichia coli K-12.</title>
        <authorList>
            <person name="Blattner F.R."/>
            <person name="Plunkett G. III"/>
            <person name="Bloch C.A."/>
            <person name="Perna N.T."/>
            <person name="Burland V."/>
            <person name="Riley M."/>
            <person name="Collado-Vides J."/>
            <person name="Glasner J.D."/>
            <person name="Rode C.K."/>
            <person name="Mayhew G.F."/>
            <person name="Gregor J."/>
            <person name="Davis N.W."/>
            <person name="Kirkpatrick H.A."/>
            <person name="Goeden M.A."/>
            <person name="Rose D.J."/>
            <person name="Mau B."/>
            <person name="Shao Y."/>
        </authorList>
    </citation>
    <scope>NUCLEOTIDE SEQUENCE [LARGE SCALE GENOMIC DNA]</scope>
    <source>
        <strain>K12 / MG1655 / ATCC 47076</strain>
    </source>
</reference>
<reference key="2">
    <citation type="journal article" date="2006" name="Mol. Syst. Biol.">
        <title>Highly accurate genome sequences of Escherichia coli K-12 strains MG1655 and W3110.</title>
        <authorList>
            <person name="Hayashi K."/>
            <person name="Morooka N."/>
            <person name="Yamamoto Y."/>
            <person name="Fujita K."/>
            <person name="Isono K."/>
            <person name="Choi S."/>
            <person name="Ohtsubo E."/>
            <person name="Baba T."/>
            <person name="Wanner B.L."/>
            <person name="Mori H."/>
            <person name="Horiuchi T."/>
        </authorList>
    </citation>
    <scope>NUCLEOTIDE SEQUENCE [LARGE SCALE GENOMIC DNA]</scope>
    <source>
        <strain>K12 / W3110 / ATCC 27325 / DSM 5911</strain>
    </source>
</reference>
<reference key="3">
    <citation type="journal article" date="1999" name="Electrophoresis">
        <title>Enrichment of low abundance proteins of Escherichia coli by hydroxyapatite chromatography.</title>
        <authorList>
            <person name="Fountoulakis M."/>
            <person name="Takacs M.-F."/>
            <person name="Berndt P."/>
            <person name="Langen H."/>
            <person name="Takacs B."/>
        </authorList>
    </citation>
    <scope>IDENTIFICATION BY MASS SPECTROMETRY</scope>
    <source>
        <strain>B / BL21</strain>
    </source>
</reference>
<accession>P76177</accession>
<accession>Q2MB75</accession>
<keyword id="KW-1185">Reference proteome</keyword>
<keyword id="KW-0732">Signal</keyword>
<feature type="signal peptide" evidence="1">
    <location>
        <begin position="1"/>
        <end position="19"/>
    </location>
</feature>
<feature type="chain" id="PRO_0000013850" description="Protein YdgH">
    <location>
        <begin position="20"/>
        <end position="314"/>
    </location>
</feature>
<name>YDGH_ECOLI</name>
<sequence length="314" mass="33903">MKLKNTLLASALLSAMAFSVNAATELTPEQAAAVKPFDRVVVTGRFNAIGEAVKAVSRRADKEGAASFYVVDTSDFGNSGNWRVVADLYKADAEKAEETSNRVINGVVELPKDQAVLIEPFDTVTVQGFYRSQPEVNDAITKAAKAKGAYSFYIVRQIDANQGGNQRITAFIYKKDAKKRIVQSPDVIPADSEAGRAALAAGGEAAKKVEIPGVATTASPSSEVGRFFETQSSKGGRYTVTLPDGTKVEELNKATAAMMVPFDSIKFSGNYGNMTEVSYQVAKRAAKKGAKYYHITRQWQERGNNLTVSADLYK</sequence>
<organism>
    <name type="scientific">Escherichia coli (strain K12)</name>
    <dbReference type="NCBI Taxonomy" id="83333"/>
    <lineage>
        <taxon>Bacteria</taxon>
        <taxon>Pseudomonadati</taxon>
        <taxon>Pseudomonadota</taxon>
        <taxon>Gammaproteobacteria</taxon>
        <taxon>Enterobacterales</taxon>
        <taxon>Enterobacteriaceae</taxon>
        <taxon>Escherichia</taxon>
    </lineage>
</organism>
<protein>
    <recommendedName>
        <fullName>Protein YdgH</fullName>
    </recommendedName>
</protein>
<comment type="similarity">
    <text evidence="2">To E.coli YjfY.</text>
</comment>
<dbReference type="EMBL" id="U00096">
    <property type="protein sequence ID" value="AAC74676.1"/>
    <property type="molecule type" value="Genomic_DNA"/>
</dbReference>
<dbReference type="EMBL" id="AP009048">
    <property type="protein sequence ID" value="BAE76481.1"/>
    <property type="molecule type" value="Genomic_DNA"/>
</dbReference>
<dbReference type="PIR" id="F64916">
    <property type="entry name" value="F64916"/>
</dbReference>
<dbReference type="RefSeq" id="NP_416121.1">
    <property type="nucleotide sequence ID" value="NC_000913.3"/>
</dbReference>
<dbReference type="RefSeq" id="WP_000769303.1">
    <property type="nucleotide sequence ID" value="NZ_LN832404.1"/>
</dbReference>
<dbReference type="SMR" id="P76177"/>
<dbReference type="BioGRID" id="4259126">
    <property type="interactions" value="2"/>
</dbReference>
<dbReference type="BioGRID" id="849506">
    <property type="interactions" value="3"/>
</dbReference>
<dbReference type="DIP" id="DIP-11716N"/>
<dbReference type="FunCoup" id="P76177">
    <property type="interactions" value="61"/>
</dbReference>
<dbReference type="IntAct" id="P76177">
    <property type="interactions" value="4"/>
</dbReference>
<dbReference type="STRING" id="511145.b1604"/>
<dbReference type="jPOST" id="P76177"/>
<dbReference type="PaxDb" id="511145-b1604"/>
<dbReference type="EnsemblBacteria" id="AAC74676">
    <property type="protein sequence ID" value="AAC74676"/>
    <property type="gene ID" value="b1604"/>
</dbReference>
<dbReference type="GeneID" id="945117"/>
<dbReference type="KEGG" id="ecj:JW1596"/>
<dbReference type="KEGG" id="eco:b1604"/>
<dbReference type="KEGG" id="ecoc:C3026_09235"/>
<dbReference type="PATRIC" id="fig|511145.12.peg.1675"/>
<dbReference type="EchoBASE" id="EB3688"/>
<dbReference type="eggNOG" id="ENOG502Z89M">
    <property type="taxonomic scope" value="Bacteria"/>
</dbReference>
<dbReference type="HOGENOM" id="CLU_876761_0_0_6"/>
<dbReference type="InParanoid" id="P76177"/>
<dbReference type="OMA" id="GAKFYHI"/>
<dbReference type="OrthoDB" id="7058817at2"/>
<dbReference type="PhylomeDB" id="P76177"/>
<dbReference type="BioCyc" id="EcoCyc:G6860-MONOMER"/>
<dbReference type="PRO" id="PR:P76177"/>
<dbReference type="Proteomes" id="UP000000625">
    <property type="component" value="Chromosome"/>
</dbReference>
<dbReference type="GO" id="GO:0006950">
    <property type="term" value="P:response to stress"/>
    <property type="evidence" value="ECO:0000318"/>
    <property type="project" value="GO_Central"/>
</dbReference>
<dbReference type="Gene3D" id="3.30.1660.10">
    <property type="entry name" value="Flavin-binding protein dodecin"/>
    <property type="match status" value="3"/>
</dbReference>
<dbReference type="InterPro" id="IPR051096">
    <property type="entry name" value="BhsA/McbA_stress_biofilm_assoc"/>
</dbReference>
<dbReference type="InterPro" id="IPR025543">
    <property type="entry name" value="Dodecin-like"/>
</dbReference>
<dbReference type="InterPro" id="IPR025539">
    <property type="entry name" value="YdgH"/>
</dbReference>
<dbReference type="InterPro" id="IPR036275">
    <property type="entry name" value="YdgH-like_sf"/>
</dbReference>
<dbReference type="InterPro" id="IPR010854">
    <property type="entry name" value="YdgH/BhsA/McbA-like_dom"/>
</dbReference>
<dbReference type="NCBIfam" id="NF040471">
    <property type="entry name" value="ydgH_STM1478"/>
    <property type="match status" value="1"/>
</dbReference>
<dbReference type="PANTHER" id="PTHR34156">
    <property type="entry name" value="OUTER MEMBRANE PROTEIN-RELATED-RELATED"/>
    <property type="match status" value="1"/>
</dbReference>
<dbReference type="PANTHER" id="PTHR34156:SF2">
    <property type="entry name" value="PROTEIN YDGH"/>
    <property type="match status" value="1"/>
</dbReference>
<dbReference type="Pfam" id="PF07338">
    <property type="entry name" value="YdgH_BhsA-like"/>
    <property type="match status" value="3"/>
</dbReference>
<dbReference type="PIRSF" id="PIRSF014774">
    <property type="entry name" value="YdgH"/>
    <property type="match status" value="1"/>
</dbReference>
<dbReference type="SUPFAM" id="SSF159871">
    <property type="entry name" value="YdgH-like"/>
    <property type="match status" value="3"/>
</dbReference>
<evidence type="ECO:0000255" key="1"/>
<evidence type="ECO:0000305" key="2"/>